<gene>
    <name type="primary">ngb</name>
    <name type="ORF">GSTENG00032294001</name>
</gene>
<feature type="chain" id="PRO_0000053401" description="Neuroglobin">
    <location>
        <begin position="1"/>
        <end position="159"/>
    </location>
</feature>
<feature type="domain" description="Globin" evidence="3">
    <location>
        <begin position="3"/>
        <end position="151"/>
    </location>
</feature>
<feature type="binding site" description="distal binding residue; reversible" evidence="2 3">
    <location>
        <position position="66"/>
    </location>
    <ligand>
        <name>heme b</name>
        <dbReference type="ChEBI" id="CHEBI:60344"/>
    </ligand>
    <ligandPart>
        <name>Fe</name>
        <dbReference type="ChEBI" id="CHEBI:18248"/>
    </ligandPart>
</feature>
<feature type="binding site" description="proximal binding residue" evidence="2 3">
    <location>
        <position position="98"/>
    </location>
    <ligand>
        <name>heme b</name>
        <dbReference type="ChEBI" id="CHEBI:60344"/>
    </ligand>
    <ligandPart>
        <name>Fe</name>
        <dbReference type="ChEBI" id="CHEBI:18248"/>
    </ligandPart>
</feature>
<keyword id="KW-0963">Cytoplasm</keyword>
<keyword id="KW-0349">Heme</keyword>
<keyword id="KW-0408">Iron</keyword>
<keyword id="KW-0479">Metal-binding</keyword>
<keyword id="KW-0496">Mitochondrion</keyword>
<keyword id="KW-0560">Oxidoreductase</keyword>
<keyword id="KW-1185">Reference proteome</keyword>
<organism>
    <name type="scientific">Tetraodon nigroviridis</name>
    <name type="common">Spotted green pufferfish</name>
    <name type="synonym">Chelonodon nigroviridis</name>
    <dbReference type="NCBI Taxonomy" id="99883"/>
    <lineage>
        <taxon>Eukaryota</taxon>
        <taxon>Metazoa</taxon>
        <taxon>Chordata</taxon>
        <taxon>Craniata</taxon>
        <taxon>Vertebrata</taxon>
        <taxon>Euteleostomi</taxon>
        <taxon>Actinopterygii</taxon>
        <taxon>Neopterygii</taxon>
        <taxon>Teleostei</taxon>
        <taxon>Neoteleostei</taxon>
        <taxon>Acanthomorphata</taxon>
        <taxon>Eupercaria</taxon>
        <taxon>Tetraodontiformes</taxon>
        <taxon>Tetradontoidea</taxon>
        <taxon>Tetraodontidae</taxon>
        <taxon>Tetraodon</taxon>
    </lineage>
</organism>
<sequence length="159" mass="17761">MEKLSSKDKELIRGSWDSLGKNKVPHGVILFSRLFELDPELLNLFHYTTNCGSTQDCLSSPEFLEHVTKVMLVIDAAVSHLDDLHSLEDFLLNLGRKHQAVGVKPQSFAMVGESLLYMLQCSLGQAYTASLRQAWLNMYSVVVASMSRGWAKNGEDKAD</sequence>
<evidence type="ECO:0000250" key="1">
    <source>
        <dbReference type="UniProtKB" id="Q9ER97"/>
    </source>
</evidence>
<evidence type="ECO:0000250" key="2">
    <source>
        <dbReference type="UniProtKB" id="Q9NPG2"/>
    </source>
</evidence>
<evidence type="ECO:0000255" key="3">
    <source>
        <dbReference type="PROSITE-ProRule" id="PRU00238"/>
    </source>
</evidence>
<evidence type="ECO:0000303" key="4">
    <source>
    </source>
</evidence>
<evidence type="ECO:0000305" key="5"/>
<reference key="1">
    <citation type="journal article" date="2001" name="Biochem. Biophys. Res. Commun.">
        <title>Neuroglobins from the zebrafish Danio rerio and the pufferfish Tetraodon nigroviridis.</title>
        <authorList>
            <person name="Awenius C."/>
            <person name="Hankeln T."/>
            <person name="Burmester T."/>
        </authorList>
    </citation>
    <scope>NUCLEOTIDE SEQUENCE [GENOMIC DNA / MRNA]</scope>
</reference>
<reference key="2">
    <citation type="journal article" date="2004" name="Nature">
        <title>Genome duplication in the teleost fish Tetraodon nigroviridis reveals the early vertebrate proto-karyotype.</title>
        <authorList>
            <person name="Jaillon O."/>
            <person name="Aury J.-M."/>
            <person name="Brunet F."/>
            <person name="Petit J.-L."/>
            <person name="Stange-Thomann N."/>
            <person name="Mauceli E."/>
            <person name="Bouneau L."/>
            <person name="Fischer C."/>
            <person name="Ozouf-Costaz C."/>
            <person name="Bernot A."/>
            <person name="Nicaud S."/>
            <person name="Jaffe D."/>
            <person name="Fisher S."/>
            <person name="Lutfalla G."/>
            <person name="Dossat C."/>
            <person name="Segurens B."/>
            <person name="Dasilva C."/>
            <person name="Salanoubat M."/>
            <person name="Levy M."/>
            <person name="Boudet N."/>
            <person name="Castellano S."/>
            <person name="Anthouard V."/>
            <person name="Jubin C."/>
            <person name="Castelli V."/>
            <person name="Katinka M."/>
            <person name="Vacherie B."/>
            <person name="Biemont C."/>
            <person name="Skalli Z."/>
            <person name="Cattolico L."/>
            <person name="Poulain J."/>
            <person name="De Berardinis V."/>
            <person name="Cruaud C."/>
            <person name="Duprat S."/>
            <person name="Brottier P."/>
            <person name="Coutanceau J.-P."/>
            <person name="Gouzy J."/>
            <person name="Parra G."/>
            <person name="Lardier G."/>
            <person name="Chapple C."/>
            <person name="McKernan K.J."/>
            <person name="McEwan P."/>
            <person name="Bosak S."/>
            <person name="Kellis M."/>
            <person name="Volff J.-N."/>
            <person name="Guigo R."/>
            <person name="Zody M.C."/>
            <person name="Mesirov J."/>
            <person name="Lindblad-Toh K."/>
            <person name="Birren B."/>
            <person name="Nusbaum C."/>
            <person name="Kahn D."/>
            <person name="Robinson-Rechavi M."/>
            <person name="Laudet V."/>
            <person name="Schachter V."/>
            <person name="Quetier F."/>
            <person name="Saurin W."/>
            <person name="Scarpelli C."/>
            <person name="Wincker P."/>
            <person name="Lander E.S."/>
            <person name="Weissenbach J."/>
            <person name="Roest Crollius H."/>
        </authorList>
    </citation>
    <scope>NUCLEOTIDE SEQUENCE [LARGE SCALE GENOMIC DNA]</scope>
</reference>
<proteinExistence type="evidence at transcript level"/>
<dbReference type="EC" id="1.7.-.-" evidence="2"/>
<dbReference type="EMBL" id="AJ315609">
    <property type="protein sequence ID" value="CAC59975.1"/>
    <property type="molecule type" value="mRNA"/>
</dbReference>
<dbReference type="EMBL" id="AJ315608">
    <property type="protein sequence ID" value="CAC59974.1"/>
    <property type="molecule type" value="Genomic_DNA"/>
</dbReference>
<dbReference type="EMBL" id="CAAE01015019">
    <property type="protein sequence ID" value="CAG10597.1"/>
    <property type="status" value="ALT_SEQ"/>
    <property type="molecule type" value="Genomic_DNA"/>
</dbReference>
<dbReference type="SMR" id="Q90W04"/>
<dbReference type="FunCoup" id="Q90W04">
    <property type="interactions" value="10"/>
</dbReference>
<dbReference type="STRING" id="99883.ENSTNIP00000020525"/>
<dbReference type="Ensembl" id="ENSTNIT00000020757.1">
    <property type="protein sequence ID" value="ENSTNIP00000020525.1"/>
    <property type="gene ID" value="ENSTNIG00000017387.1"/>
</dbReference>
<dbReference type="KEGG" id="tng:GSTEN00032294G001"/>
<dbReference type="GeneTree" id="ENSGT00510000048375"/>
<dbReference type="HOGENOM" id="CLU_003827_13_5_1"/>
<dbReference type="InParanoid" id="Q90W04"/>
<dbReference type="OMA" id="MQRGWET"/>
<dbReference type="OrthoDB" id="436496at2759"/>
<dbReference type="TreeFam" id="TF333247"/>
<dbReference type="Proteomes" id="UP000007303">
    <property type="component" value="Unassembled WGS sequence"/>
</dbReference>
<dbReference type="GO" id="GO:0005829">
    <property type="term" value="C:cytosol"/>
    <property type="evidence" value="ECO:0007669"/>
    <property type="project" value="UniProtKB-SubCell"/>
</dbReference>
<dbReference type="GO" id="GO:0005759">
    <property type="term" value="C:mitochondrial matrix"/>
    <property type="evidence" value="ECO:0007669"/>
    <property type="project" value="UniProtKB-SubCell"/>
</dbReference>
<dbReference type="GO" id="GO:0005092">
    <property type="term" value="F:GDP-dissociation inhibitor activity"/>
    <property type="evidence" value="ECO:0000250"/>
    <property type="project" value="UniProtKB"/>
</dbReference>
<dbReference type="GO" id="GO:0020037">
    <property type="term" value="F:heme binding"/>
    <property type="evidence" value="ECO:0007669"/>
    <property type="project" value="InterPro"/>
</dbReference>
<dbReference type="GO" id="GO:0046872">
    <property type="term" value="F:metal ion binding"/>
    <property type="evidence" value="ECO:0007669"/>
    <property type="project" value="UniProtKB-KW"/>
</dbReference>
<dbReference type="GO" id="GO:0098809">
    <property type="term" value="F:nitrite reductase activity"/>
    <property type="evidence" value="ECO:0000250"/>
    <property type="project" value="UniProtKB"/>
</dbReference>
<dbReference type="GO" id="GO:0019825">
    <property type="term" value="F:oxygen binding"/>
    <property type="evidence" value="ECO:0000250"/>
    <property type="project" value="UniProtKB"/>
</dbReference>
<dbReference type="GO" id="GO:0071456">
    <property type="term" value="P:cellular response to hypoxia"/>
    <property type="evidence" value="ECO:0000250"/>
    <property type="project" value="UniProtKB"/>
</dbReference>
<dbReference type="Gene3D" id="1.10.490.10">
    <property type="entry name" value="Globins"/>
    <property type="match status" value="1"/>
</dbReference>
<dbReference type="InterPro" id="IPR000971">
    <property type="entry name" value="Globin"/>
</dbReference>
<dbReference type="InterPro" id="IPR050532">
    <property type="entry name" value="Globin-like_OT"/>
</dbReference>
<dbReference type="InterPro" id="IPR009050">
    <property type="entry name" value="Globin-like_sf"/>
</dbReference>
<dbReference type="InterPro" id="IPR012292">
    <property type="entry name" value="Globin/Proto"/>
</dbReference>
<dbReference type="PANTHER" id="PTHR46458">
    <property type="entry name" value="BLR2807 PROTEIN"/>
    <property type="match status" value="1"/>
</dbReference>
<dbReference type="PANTHER" id="PTHR46458:SF19">
    <property type="entry name" value="NEUROGLOBIN"/>
    <property type="match status" value="1"/>
</dbReference>
<dbReference type="Pfam" id="PF00042">
    <property type="entry name" value="Globin"/>
    <property type="match status" value="1"/>
</dbReference>
<dbReference type="PRINTS" id="PR00188">
    <property type="entry name" value="PLANTGLOBIN"/>
</dbReference>
<dbReference type="SUPFAM" id="SSF46458">
    <property type="entry name" value="Globin-like"/>
    <property type="match status" value="1"/>
</dbReference>
<dbReference type="PROSITE" id="PS01033">
    <property type="entry name" value="GLOBIN"/>
    <property type="match status" value="1"/>
</dbReference>
<protein>
    <recommendedName>
        <fullName evidence="4">Neuroglobin</fullName>
    </recommendedName>
    <alternativeName>
        <fullName evidence="2">Nitrite reductase</fullName>
        <ecNumber evidence="2">1.7.-.-</ecNumber>
    </alternativeName>
</protein>
<comment type="function">
    <text evidence="2">Monomeric globin with a bis-histidyl six-coordinate heme-iron atom through which it can bind dioxygen, carbon monoxide and nitric oxide. Could help transport oxygen and increase its availability to the metabolically active neuronal tissues, though its low quantity in tissues as well as its high affinity for dioxygen, which may limit its oxygen-releasing ability, argue against it. The ferrous/deoxygenated form exhibits a nitrite reductase activity and it could produce nitric oxide which in turn inhibits cellular respiration in response to hypoxia. In its ferrous/deoxygenated state, it may also exhibit GDI (Guanine nucleotide Dissociation Inhibitor) activity toward heterotrimeric G-alpha proteins, thereby regulating signal transduction to facilitate neuroprotective responses in the wake of hypoxia and associated oxidative stress.</text>
</comment>
<comment type="catalytic activity">
    <reaction evidence="2">
        <text>Fe(III)-heme b-[protein] + nitric oxide + H2O = Fe(II)-heme b-[protein] + nitrite + 2 H(+)</text>
        <dbReference type="Rhea" id="RHEA:77711"/>
        <dbReference type="Rhea" id="RHEA-COMP:18975"/>
        <dbReference type="Rhea" id="RHEA-COMP:18976"/>
        <dbReference type="ChEBI" id="CHEBI:15377"/>
        <dbReference type="ChEBI" id="CHEBI:15378"/>
        <dbReference type="ChEBI" id="CHEBI:16301"/>
        <dbReference type="ChEBI" id="CHEBI:16480"/>
        <dbReference type="ChEBI" id="CHEBI:55376"/>
        <dbReference type="ChEBI" id="CHEBI:60344"/>
    </reaction>
    <physiologicalReaction direction="right-to-left" evidence="2">
        <dbReference type="Rhea" id="RHEA:77713"/>
    </physiologicalReaction>
</comment>
<comment type="subunit">
    <text evidence="1 2">Monomer (By similarity). Homodimers and homotetramers. Mainly monomeric but also detected as part of homodimers and homotetramers (By similarity).</text>
</comment>
<comment type="subcellular location">
    <subcellularLocation>
        <location evidence="1">Cytoplasm</location>
        <location evidence="1">Cytosol</location>
    </subcellularLocation>
    <subcellularLocation>
        <location evidence="1">Mitochondrion matrix</location>
    </subcellularLocation>
    <text evidence="1">Enriched in mitochondrial matrix upon oxygen-glucose deprivation.</text>
</comment>
<comment type="similarity">
    <text evidence="3">Belongs to the globin family.</text>
</comment>
<comment type="sequence caution" evidence="5">
    <conflict type="erroneous gene model prediction">
        <sequence resource="EMBL-CDS" id="CAG10597"/>
    </conflict>
</comment>
<accession>Q90W04</accession>
<accession>Q4RLY5</accession>
<name>NGB_TETNG</name>